<evidence type="ECO:0000255" key="1">
    <source>
        <dbReference type="HAMAP-Rule" id="MF_00624"/>
    </source>
</evidence>
<protein>
    <recommendedName>
        <fullName evidence="1">Glucose-1-phosphate adenylyltransferase</fullName>
        <ecNumber evidence="1">2.7.7.27</ecNumber>
    </recommendedName>
    <alternativeName>
        <fullName evidence="1">ADP-glucose pyrophosphorylase</fullName>
        <shortName evidence="1">ADPGlc PPase</shortName>
    </alternativeName>
    <alternativeName>
        <fullName evidence="1">ADP-glucose synthase</fullName>
    </alternativeName>
</protein>
<gene>
    <name evidence="1" type="primary">glgC</name>
    <name type="ordered locus">SDY_3576</name>
</gene>
<sequence>MVSLEKNDHLMLARQLPLKSVALILAGGRGTRLKDLTNKRAKPAVHFGGKFRIIDFALSNCINSGIRRMGVITQYQSHTLVQHIQRGWSFFNEEMNEFVDLLPAQQRMKGENWYRGTADAVTQNLDIIRRYKAEYVVILAGDHIYKQDYSRMLIDHVEKGARCTVACMPVPIEEASAFGVMAVDENDKIIEFVEKPANPPSMPNDPSKSLASMGIYVFDADYLYELLEEDDRDENSSHDFGKDLIPKITEAGLAYAHPFPLSCVQSDPDAEPYWRDVGTLEAYWKANLDLASVVPELDMYDRNWPIRTYNESLPPAKFVQDRSGSHGMTLNSLVSGGCVISGSVVVQSVLFSRVRVNSFCNIDSAVLLPEVWVGRSCRLRRCVIDRACVIPEGMVIGENAEEDARRFYRSEEGIVLVTREMLRKLGHKQER</sequence>
<dbReference type="EC" id="2.7.7.27" evidence="1"/>
<dbReference type="EMBL" id="CP000034">
    <property type="protein sequence ID" value="ABB63550.1"/>
    <property type="molecule type" value="Genomic_DNA"/>
</dbReference>
<dbReference type="RefSeq" id="WP_000253975.1">
    <property type="nucleotide sequence ID" value="NC_007606.1"/>
</dbReference>
<dbReference type="RefSeq" id="YP_405041.1">
    <property type="nucleotide sequence ID" value="NC_007606.1"/>
</dbReference>
<dbReference type="SMR" id="Q32AV5"/>
<dbReference type="STRING" id="300267.SDY_3576"/>
<dbReference type="EnsemblBacteria" id="ABB63550">
    <property type="protein sequence ID" value="ABB63550"/>
    <property type="gene ID" value="SDY_3576"/>
</dbReference>
<dbReference type="GeneID" id="93778559"/>
<dbReference type="KEGG" id="sdy:SDY_3576"/>
<dbReference type="PATRIC" id="fig|300267.13.peg.4247"/>
<dbReference type="HOGENOM" id="CLU_029499_14_1_6"/>
<dbReference type="UniPathway" id="UPA00164"/>
<dbReference type="Proteomes" id="UP000002716">
    <property type="component" value="Chromosome"/>
</dbReference>
<dbReference type="GO" id="GO:0005524">
    <property type="term" value="F:ATP binding"/>
    <property type="evidence" value="ECO:0007669"/>
    <property type="project" value="UniProtKB-KW"/>
</dbReference>
<dbReference type="GO" id="GO:0008878">
    <property type="term" value="F:glucose-1-phosphate adenylyltransferase activity"/>
    <property type="evidence" value="ECO:0007669"/>
    <property type="project" value="UniProtKB-UniRule"/>
</dbReference>
<dbReference type="GO" id="GO:0005978">
    <property type="term" value="P:glycogen biosynthetic process"/>
    <property type="evidence" value="ECO:0007669"/>
    <property type="project" value="UniProtKB-UniRule"/>
</dbReference>
<dbReference type="CDD" id="cd02508">
    <property type="entry name" value="ADP_Glucose_PP"/>
    <property type="match status" value="1"/>
</dbReference>
<dbReference type="CDD" id="cd04651">
    <property type="entry name" value="LbH_G1P_AT_C"/>
    <property type="match status" value="1"/>
</dbReference>
<dbReference type="FunFam" id="2.160.10.10:FF:000006">
    <property type="entry name" value="Glucose-1-phosphate adenylyltransferase"/>
    <property type="match status" value="1"/>
</dbReference>
<dbReference type="FunFam" id="3.90.550.10:FF:000014">
    <property type="entry name" value="Glucose-1-phosphate adenylyltransferase"/>
    <property type="match status" value="1"/>
</dbReference>
<dbReference type="Gene3D" id="2.160.10.10">
    <property type="entry name" value="Hexapeptide repeat proteins"/>
    <property type="match status" value="1"/>
</dbReference>
<dbReference type="Gene3D" id="3.90.550.10">
    <property type="entry name" value="Spore Coat Polysaccharide Biosynthesis Protein SpsA, Chain A"/>
    <property type="match status" value="1"/>
</dbReference>
<dbReference type="HAMAP" id="MF_00624">
    <property type="entry name" value="GlgC"/>
    <property type="match status" value="1"/>
</dbReference>
<dbReference type="InterPro" id="IPR011831">
    <property type="entry name" value="ADP-Glc_PPase"/>
</dbReference>
<dbReference type="InterPro" id="IPR005836">
    <property type="entry name" value="ADP_Glu_pyroP_CS"/>
</dbReference>
<dbReference type="InterPro" id="IPR023049">
    <property type="entry name" value="GlgC_bac"/>
</dbReference>
<dbReference type="InterPro" id="IPR056818">
    <property type="entry name" value="GlmU/GlgC-like_hexapep"/>
</dbReference>
<dbReference type="InterPro" id="IPR005835">
    <property type="entry name" value="NTP_transferase_dom"/>
</dbReference>
<dbReference type="InterPro" id="IPR029044">
    <property type="entry name" value="Nucleotide-diphossugar_trans"/>
</dbReference>
<dbReference type="InterPro" id="IPR011004">
    <property type="entry name" value="Trimer_LpxA-like_sf"/>
</dbReference>
<dbReference type="NCBIfam" id="TIGR02091">
    <property type="entry name" value="glgC"/>
    <property type="match status" value="1"/>
</dbReference>
<dbReference type="NCBIfam" id="NF001947">
    <property type="entry name" value="PRK00725.1"/>
    <property type="match status" value="1"/>
</dbReference>
<dbReference type="NCBIfam" id="NF002023">
    <property type="entry name" value="PRK00844.1"/>
    <property type="match status" value="1"/>
</dbReference>
<dbReference type="PANTHER" id="PTHR43523:SF2">
    <property type="entry name" value="GLUCOSE-1-PHOSPHATE ADENYLYLTRANSFERASE"/>
    <property type="match status" value="1"/>
</dbReference>
<dbReference type="PANTHER" id="PTHR43523">
    <property type="entry name" value="GLUCOSE-1-PHOSPHATE ADENYLYLTRANSFERASE-RELATED"/>
    <property type="match status" value="1"/>
</dbReference>
<dbReference type="Pfam" id="PF24894">
    <property type="entry name" value="Hexapep_GlmU"/>
    <property type="match status" value="1"/>
</dbReference>
<dbReference type="Pfam" id="PF00483">
    <property type="entry name" value="NTP_transferase"/>
    <property type="match status" value="1"/>
</dbReference>
<dbReference type="SUPFAM" id="SSF53448">
    <property type="entry name" value="Nucleotide-diphospho-sugar transferases"/>
    <property type="match status" value="1"/>
</dbReference>
<dbReference type="SUPFAM" id="SSF51161">
    <property type="entry name" value="Trimeric LpxA-like enzymes"/>
    <property type="match status" value="1"/>
</dbReference>
<dbReference type="PROSITE" id="PS00808">
    <property type="entry name" value="ADP_GLC_PYROPHOSPH_1"/>
    <property type="match status" value="1"/>
</dbReference>
<dbReference type="PROSITE" id="PS00809">
    <property type="entry name" value="ADP_GLC_PYROPHOSPH_2"/>
    <property type="match status" value="1"/>
</dbReference>
<dbReference type="PROSITE" id="PS00810">
    <property type="entry name" value="ADP_GLC_PYROPHOSPH_3"/>
    <property type="match status" value="1"/>
</dbReference>
<proteinExistence type="inferred from homology"/>
<name>GLGC_SHIDS</name>
<reference key="1">
    <citation type="journal article" date="2005" name="Nucleic Acids Res.">
        <title>Genome dynamics and diversity of Shigella species, the etiologic agents of bacillary dysentery.</title>
        <authorList>
            <person name="Yang F."/>
            <person name="Yang J."/>
            <person name="Zhang X."/>
            <person name="Chen L."/>
            <person name="Jiang Y."/>
            <person name="Yan Y."/>
            <person name="Tang X."/>
            <person name="Wang J."/>
            <person name="Xiong Z."/>
            <person name="Dong J."/>
            <person name="Xue Y."/>
            <person name="Zhu Y."/>
            <person name="Xu X."/>
            <person name="Sun L."/>
            <person name="Chen S."/>
            <person name="Nie H."/>
            <person name="Peng J."/>
            <person name="Xu J."/>
            <person name="Wang Y."/>
            <person name="Yuan Z."/>
            <person name="Wen Y."/>
            <person name="Yao Z."/>
            <person name="Shen Y."/>
            <person name="Qiang B."/>
            <person name="Hou Y."/>
            <person name="Yu J."/>
            <person name="Jin Q."/>
        </authorList>
    </citation>
    <scope>NUCLEOTIDE SEQUENCE [LARGE SCALE GENOMIC DNA]</scope>
    <source>
        <strain>Sd197</strain>
    </source>
</reference>
<organism>
    <name type="scientific">Shigella dysenteriae serotype 1 (strain Sd197)</name>
    <dbReference type="NCBI Taxonomy" id="300267"/>
    <lineage>
        <taxon>Bacteria</taxon>
        <taxon>Pseudomonadati</taxon>
        <taxon>Pseudomonadota</taxon>
        <taxon>Gammaproteobacteria</taxon>
        <taxon>Enterobacterales</taxon>
        <taxon>Enterobacteriaceae</taxon>
        <taxon>Shigella</taxon>
    </lineage>
</organism>
<accession>Q32AV5</accession>
<comment type="function">
    <text evidence="1">Involved in the biosynthesis of ADP-glucose, a building block required for the elongation reactions to produce glycogen. Catalyzes the reaction between ATP and alpha-D-glucose 1-phosphate (G1P) to produce pyrophosphate and ADP-Glc.</text>
</comment>
<comment type="catalytic activity">
    <reaction evidence="1">
        <text>alpha-D-glucose 1-phosphate + ATP + H(+) = ADP-alpha-D-glucose + diphosphate</text>
        <dbReference type="Rhea" id="RHEA:12120"/>
        <dbReference type="ChEBI" id="CHEBI:15378"/>
        <dbReference type="ChEBI" id="CHEBI:30616"/>
        <dbReference type="ChEBI" id="CHEBI:33019"/>
        <dbReference type="ChEBI" id="CHEBI:57498"/>
        <dbReference type="ChEBI" id="CHEBI:58601"/>
        <dbReference type="EC" id="2.7.7.27"/>
    </reaction>
</comment>
<comment type="activity regulation">
    <text evidence="1">Allosterically activated by fructose-1,6-bisphosphate (F16BP) and inhibited by AMP.</text>
</comment>
<comment type="pathway">
    <text evidence="1">Glycan biosynthesis; glycogen biosynthesis.</text>
</comment>
<comment type="subunit">
    <text evidence="1">Homotetramer.</text>
</comment>
<comment type="similarity">
    <text evidence="1">Belongs to the bacterial/plant glucose-1-phosphate adenylyltransferase family.</text>
</comment>
<keyword id="KW-0021">Allosteric enzyme</keyword>
<keyword id="KW-0067">ATP-binding</keyword>
<keyword id="KW-0119">Carbohydrate metabolism</keyword>
<keyword id="KW-0320">Glycogen biosynthesis</keyword>
<keyword id="KW-0321">Glycogen metabolism</keyword>
<keyword id="KW-0547">Nucleotide-binding</keyword>
<keyword id="KW-0548">Nucleotidyltransferase</keyword>
<keyword id="KW-1185">Reference proteome</keyword>
<keyword id="KW-0808">Transferase</keyword>
<feature type="chain" id="PRO_0000261901" description="Glucose-1-phosphate adenylyltransferase">
    <location>
        <begin position="1"/>
        <end position="431"/>
    </location>
</feature>
<feature type="binding site" evidence="1">
    <location>
        <position position="39"/>
    </location>
    <ligand>
        <name>beta-D-fructose 1,6-bisphosphate</name>
        <dbReference type="ChEBI" id="CHEBI:32966"/>
    </ligand>
</feature>
<feature type="binding site" evidence="1">
    <location>
        <position position="40"/>
    </location>
    <ligand>
        <name>AMP</name>
        <dbReference type="ChEBI" id="CHEBI:456215"/>
    </ligand>
</feature>
<feature type="binding site" evidence="1">
    <location>
        <position position="46"/>
    </location>
    <ligand>
        <name>AMP</name>
        <dbReference type="ChEBI" id="CHEBI:456215"/>
    </ligand>
</feature>
<feature type="binding site" evidence="1">
    <location>
        <position position="52"/>
    </location>
    <ligand>
        <name>AMP</name>
        <dbReference type="ChEBI" id="CHEBI:456215"/>
    </ligand>
</feature>
<feature type="binding site" evidence="1">
    <location>
        <position position="114"/>
    </location>
    <ligand>
        <name>alpha-D-glucose 1-phosphate</name>
        <dbReference type="ChEBI" id="CHEBI:58601"/>
    </ligand>
</feature>
<feature type="binding site" evidence="1">
    <location>
        <position position="130"/>
    </location>
    <ligand>
        <name>AMP</name>
        <dbReference type="ChEBI" id="CHEBI:456215"/>
    </ligand>
</feature>
<feature type="binding site" evidence="1">
    <location>
        <position position="179"/>
    </location>
    <ligand>
        <name>alpha-D-glucose 1-phosphate</name>
        <dbReference type="ChEBI" id="CHEBI:58601"/>
    </ligand>
</feature>
<feature type="binding site" evidence="1">
    <location>
        <begin position="194"/>
        <end position="195"/>
    </location>
    <ligand>
        <name>alpha-D-glucose 1-phosphate</name>
        <dbReference type="ChEBI" id="CHEBI:58601"/>
    </ligand>
</feature>
<feature type="binding site" evidence="1">
    <location>
        <position position="212"/>
    </location>
    <ligand>
        <name>alpha-D-glucose 1-phosphate</name>
        <dbReference type="ChEBI" id="CHEBI:58601"/>
    </ligand>
</feature>
<feature type="binding site" evidence="1">
    <location>
        <position position="370"/>
    </location>
    <ligand>
        <name>AMP</name>
        <dbReference type="ChEBI" id="CHEBI:456215"/>
    </ligand>
</feature>
<feature type="binding site" evidence="1">
    <location>
        <position position="386"/>
    </location>
    <ligand>
        <name>AMP</name>
        <dbReference type="ChEBI" id="CHEBI:456215"/>
    </ligand>
</feature>
<feature type="binding site" evidence="1">
    <location>
        <begin position="419"/>
        <end position="423"/>
    </location>
    <ligand>
        <name>beta-D-fructose 1,6-bisphosphate</name>
        <dbReference type="ChEBI" id="CHEBI:32966"/>
    </ligand>
</feature>
<feature type="binding site" evidence="1">
    <location>
        <begin position="429"/>
        <end position="431"/>
    </location>
    <ligand>
        <name>beta-D-fructose 1,6-bisphosphate</name>
        <dbReference type="ChEBI" id="CHEBI:32966"/>
    </ligand>
</feature>
<feature type="site" description="Could play a key role in the communication between the regulatory and the substrate sites" evidence="1">
    <location>
        <position position="74"/>
    </location>
</feature>
<feature type="site" description="Could play a key role in the communication between the regulatory and the substrate sites" evidence="1">
    <location>
        <position position="113"/>
    </location>
</feature>